<gene>
    <name evidence="1" type="primary">clpP</name>
    <name type="ordered locus">FTA_0943</name>
</gene>
<accession>A7NBR6</accession>
<reference key="1">
    <citation type="journal article" date="2009" name="PLoS ONE">
        <title>Complete genome sequence of Francisella tularensis subspecies holarctica FTNF002-00.</title>
        <authorList>
            <person name="Barabote R.D."/>
            <person name="Xie G."/>
            <person name="Brettin T.S."/>
            <person name="Hinrichs S.H."/>
            <person name="Fey P.D."/>
            <person name="Jay J.J."/>
            <person name="Engle J.L."/>
            <person name="Godbole S.D."/>
            <person name="Noronha J.M."/>
            <person name="Scheuermann R.H."/>
            <person name="Zhou L.W."/>
            <person name="Lion C."/>
            <person name="Dempsey M.P."/>
        </authorList>
    </citation>
    <scope>NUCLEOTIDE SEQUENCE [LARGE SCALE GENOMIC DNA]</scope>
    <source>
        <strain>FTNF002-00 / FTA</strain>
    </source>
</reference>
<proteinExistence type="inferred from homology"/>
<sequence>MITNNLVPTVIEKTAGGERAFDIYSRLLKERIVFLNGEVNDHSANLVIAQLLFLESEDPDKDIYFYINSPGGMVTAGMGVYDTMQFIKPDVSTICIGLAASMGSLLLAGGAKGKRYSLPSSQIMIHQPLGGFRGQASDIEIHAKNILRIKDRLNKVLAHHTGQDLETIVKDTDRDNFMMADEAKAYGLIDHVIESREAIIK</sequence>
<name>CLPP_FRATF</name>
<evidence type="ECO:0000255" key="1">
    <source>
        <dbReference type="HAMAP-Rule" id="MF_00444"/>
    </source>
</evidence>
<organism>
    <name type="scientific">Francisella tularensis subsp. holarctica (strain FTNF002-00 / FTA)</name>
    <dbReference type="NCBI Taxonomy" id="458234"/>
    <lineage>
        <taxon>Bacteria</taxon>
        <taxon>Pseudomonadati</taxon>
        <taxon>Pseudomonadota</taxon>
        <taxon>Gammaproteobacteria</taxon>
        <taxon>Thiotrichales</taxon>
        <taxon>Francisellaceae</taxon>
        <taxon>Francisella</taxon>
    </lineage>
</organism>
<feature type="chain" id="PRO_1000026092" description="ATP-dependent Clp protease proteolytic subunit">
    <location>
        <begin position="1"/>
        <end position="201"/>
    </location>
</feature>
<feature type="active site" description="Nucleophile" evidence="1">
    <location>
        <position position="101"/>
    </location>
</feature>
<feature type="active site" evidence="1">
    <location>
        <position position="126"/>
    </location>
</feature>
<keyword id="KW-0963">Cytoplasm</keyword>
<keyword id="KW-0378">Hydrolase</keyword>
<keyword id="KW-0645">Protease</keyword>
<keyword id="KW-0720">Serine protease</keyword>
<comment type="function">
    <text evidence="1">Cleaves peptides in various proteins in a process that requires ATP hydrolysis. Has a chymotrypsin-like activity. Plays a major role in the degradation of misfolded proteins.</text>
</comment>
<comment type="catalytic activity">
    <reaction evidence="1">
        <text>Hydrolysis of proteins to small peptides in the presence of ATP and magnesium. alpha-casein is the usual test substrate. In the absence of ATP, only oligopeptides shorter than five residues are hydrolyzed (such as succinyl-Leu-Tyr-|-NHMec, and Leu-Tyr-Leu-|-Tyr-Trp, in which cleavage of the -Tyr-|-Leu- and -Tyr-|-Trp bonds also occurs).</text>
        <dbReference type="EC" id="3.4.21.92"/>
    </reaction>
</comment>
<comment type="subunit">
    <text evidence="1">Fourteen ClpP subunits assemble into 2 heptameric rings which stack back to back to give a disk-like structure with a central cavity, resembling the structure of eukaryotic proteasomes.</text>
</comment>
<comment type="subcellular location">
    <subcellularLocation>
        <location evidence="1">Cytoplasm</location>
    </subcellularLocation>
</comment>
<comment type="similarity">
    <text evidence="1">Belongs to the peptidase S14 family.</text>
</comment>
<dbReference type="EC" id="3.4.21.92" evidence="1"/>
<dbReference type="EMBL" id="CP000803">
    <property type="protein sequence ID" value="ABU61419.1"/>
    <property type="molecule type" value="Genomic_DNA"/>
</dbReference>
<dbReference type="RefSeq" id="WP_003015534.1">
    <property type="nucleotide sequence ID" value="NC_009749.1"/>
</dbReference>
<dbReference type="SMR" id="A7NBR6"/>
<dbReference type="MEROPS" id="S14.001"/>
<dbReference type="GeneID" id="75265209"/>
<dbReference type="KEGG" id="fta:FTA_0943"/>
<dbReference type="HOGENOM" id="CLU_058707_3_2_6"/>
<dbReference type="GO" id="GO:0005737">
    <property type="term" value="C:cytoplasm"/>
    <property type="evidence" value="ECO:0007669"/>
    <property type="project" value="UniProtKB-SubCell"/>
</dbReference>
<dbReference type="GO" id="GO:0009368">
    <property type="term" value="C:endopeptidase Clp complex"/>
    <property type="evidence" value="ECO:0007669"/>
    <property type="project" value="TreeGrafter"/>
</dbReference>
<dbReference type="GO" id="GO:0004176">
    <property type="term" value="F:ATP-dependent peptidase activity"/>
    <property type="evidence" value="ECO:0007669"/>
    <property type="project" value="InterPro"/>
</dbReference>
<dbReference type="GO" id="GO:0051117">
    <property type="term" value="F:ATPase binding"/>
    <property type="evidence" value="ECO:0007669"/>
    <property type="project" value="TreeGrafter"/>
</dbReference>
<dbReference type="GO" id="GO:0004252">
    <property type="term" value="F:serine-type endopeptidase activity"/>
    <property type="evidence" value="ECO:0007669"/>
    <property type="project" value="UniProtKB-UniRule"/>
</dbReference>
<dbReference type="GO" id="GO:0006515">
    <property type="term" value="P:protein quality control for misfolded or incompletely synthesized proteins"/>
    <property type="evidence" value="ECO:0007669"/>
    <property type="project" value="TreeGrafter"/>
</dbReference>
<dbReference type="CDD" id="cd07017">
    <property type="entry name" value="S14_ClpP_2"/>
    <property type="match status" value="1"/>
</dbReference>
<dbReference type="FunFam" id="3.90.226.10:FF:000001">
    <property type="entry name" value="ATP-dependent Clp protease proteolytic subunit"/>
    <property type="match status" value="1"/>
</dbReference>
<dbReference type="Gene3D" id="3.90.226.10">
    <property type="entry name" value="2-enoyl-CoA Hydratase, Chain A, domain 1"/>
    <property type="match status" value="1"/>
</dbReference>
<dbReference type="HAMAP" id="MF_00444">
    <property type="entry name" value="ClpP"/>
    <property type="match status" value="1"/>
</dbReference>
<dbReference type="InterPro" id="IPR001907">
    <property type="entry name" value="ClpP"/>
</dbReference>
<dbReference type="InterPro" id="IPR029045">
    <property type="entry name" value="ClpP/crotonase-like_dom_sf"/>
</dbReference>
<dbReference type="InterPro" id="IPR023562">
    <property type="entry name" value="ClpP/TepA"/>
</dbReference>
<dbReference type="InterPro" id="IPR033135">
    <property type="entry name" value="ClpP_His_AS"/>
</dbReference>
<dbReference type="InterPro" id="IPR018215">
    <property type="entry name" value="ClpP_Ser_AS"/>
</dbReference>
<dbReference type="NCBIfam" id="TIGR00493">
    <property type="entry name" value="clpP"/>
    <property type="match status" value="1"/>
</dbReference>
<dbReference type="NCBIfam" id="NF001368">
    <property type="entry name" value="PRK00277.1"/>
    <property type="match status" value="1"/>
</dbReference>
<dbReference type="NCBIfam" id="NF009205">
    <property type="entry name" value="PRK12553.1"/>
    <property type="match status" value="1"/>
</dbReference>
<dbReference type="PANTHER" id="PTHR10381">
    <property type="entry name" value="ATP-DEPENDENT CLP PROTEASE PROTEOLYTIC SUBUNIT"/>
    <property type="match status" value="1"/>
</dbReference>
<dbReference type="PANTHER" id="PTHR10381:SF70">
    <property type="entry name" value="ATP-DEPENDENT CLP PROTEASE PROTEOLYTIC SUBUNIT"/>
    <property type="match status" value="1"/>
</dbReference>
<dbReference type="Pfam" id="PF00574">
    <property type="entry name" value="CLP_protease"/>
    <property type="match status" value="1"/>
</dbReference>
<dbReference type="PRINTS" id="PR00127">
    <property type="entry name" value="CLPPROTEASEP"/>
</dbReference>
<dbReference type="SUPFAM" id="SSF52096">
    <property type="entry name" value="ClpP/crotonase"/>
    <property type="match status" value="1"/>
</dbReference>
<dbReference type="PROSITE" id="PS00382">
    <property type="entry name" value="CLP_PROTEASE_HIS"/>
    <property type="match status" value="1"/>
</dbReference>
<dbReference type="PROSITE" id="PS00381">
    <property type="entry name" value="CLP_PROTEASE_SER"/>
    <property type="match status" value="1"/>
</dbReference>
<protein>
    <recommendedName>
        <fullName evidence="1">ATP-dependent Clp protease proteolytic subunit</fullName>
        <ecNumber evidence="1">3.4.21.92</ecNumber>
    </recommendedName>
    <alternativeName>
        <fullName evidence="1">Endopeptidase Clp</fullName>
    </alternativeName>
</protein>